<comment type="function">
    <text evidence="1">Binds the lower part of the 30S subunit head. Binds mRNA in the 70S ribosome, positioning it for translation.</text>
</comment>
<comment type="subunit">
    <text evidence="1">Part of the 30S ribosomal subunit. Forms a tight complex with proteins S10 and S14.</text>
</comment>
<comment type="similarity">
    <text evidence="1">Belongs to the universal ribosomal protein uS3 family.</text>
</comment>
<proteinExistence type="inferred from homology"/>
<keyword id="KW-0687">Ribonucleoprotein</keyword>
<keyword id="KW-0689">Ribosomal protein</keyword>
<keyword id="KW-0694">RNA-binding</keyword>
<keyword id="KW-0699">rRNA-binding</keyword>
<organism>
    <name type="scientific">Anoxybacillus flavithermus (strain DSM 21510 / WK1)</name>
    <dbReference type="NCBI Taxonomy" id="491915"/>
    <lineage>
        <taxon>Bacteria</taxon>
        <taxon>Bacillati</taxon>
        <taxon>Bacillota</taxon>
        <taxon>Bacilli</taxon>
        <taxon>Bacillales</taxon>
        <taxon>Anoxybacillaceae</taxon>
        <taxon>Anoxybacillus</taxon>
    </lineage>
</organism>
<protein>
    <recommendedName>
        <fullName evidence="1">Small ribosomal subunit protein uS3</fullName>
    </recommendedName>
    <alternativeName>
        <fullName evidence="2">30S ribosomal protein S3</fullName>
    </alternativeName>
</protein>
<reference key="1">
    <citation type="journal article" date="2008" name="Genome Biol.">
        <title>Encapsulated in silica: genome, proteome and physiology of the thermophilic bacterium Anoxybacillus flavithermus WK1.</title>
        <authorList>
            <person name="Saw J.H."/>
            <person name="Mountain B.W."/>
            <person name="Feng L."/>
            <person name="Omelchenko M.V."/>
            <person name="Hou S."/>
            <person name="Saito J.A."/>
            <person name="Stott M.B."/>
            <person name="Li D."/>
            <person name="Zhao G."/>
            <person name="Wu J."/>
            <person name="Galperin M.Y."/>
            <person name="Koonin E.V."/>
            <person name="Makarova K.S."/>
            <person name="Wolf Y.I."/>
            <person name="Rigden D.J."/>
            <person name="Dunfield P.F."/>
            <person name="Wang L."/>
            <person name="Alam M."/>
        </authorList>
    </citation>
    <scope>NUCLEOTIDE SEQUENCE [LARGE SCALE GENOMIC DNA]</scope>
    <source>
        <strain>DSM 21510 / WK1</strain>
    </source>
</reference>
<accession>B7GJ73</accession>
<dbReference type="EMBL" id="CP000922">
    <property type="protein sequence ID" value="ACJ32495.1"/>
    <property type="molecule type" value="Genomic_DNA"/>
</dbReference>
<dbReference type="RefSeq" id="WP_003397666.1">
    <property type="nucleotide sequence ID" value="NC_011567.1"/>
</dbReference>
<dbReference type="SMR" id="B7GJ73"/>
<dbReference type="STRING" id="491915.Aflv_0111"/>
<dbReference type="GeneID" id="7036310"/>
<dbReference type="KEGG" id="afl:Aflv_0111"/>
<dbReference type="eggNOG" id="COG0092">
    <property type="taxonomic scope" value="Bacteria"/>
</dbReference>
<dbReference type="HOGENOM" id="CLU_058591_0_2_9"/>
<dbReference type="Proteomes" id="UP000000742">
    <property type="component" value="Chromosome"/>
</dbReference>
<dbReference type="GO" id="GO:0022627">
    <property type="term" value="C:cytosolic small ribosomal subunit"/>
    <property type="evidence" value="ECO:0007669"/>
    <property type="project" value="TreeGrafter"/>
</dbReference>
<dbReference type="GO" id="GO:0003729">
    <property type="term" value="F:mRNA binding"/>
    <property type="evidence" value="ECO:0007669"/>
    <property type="project" value="UniProtKB-UniRule"/>
</dbReference>
<dbReference type="GO" id="GO:0019843">
    <property type="term" value="F:rRNA binding"/>
    <property type="evidence" value="ECO:0007669"/>
    <property type="project" value="UniProtKB-UniRule"/>
</dbReference>
<dbReference type="GO" id="GO:0003735">
    <property type="term" value="F:structural constituent of ribosome"/>
    <property type="evidence" value="ECO:0007669"/>
    <property type="project" value="InterPro"/>
</dbReference>
<dbReference type="GO" id="GO:0006412">
    <property type="term" value="P:translation"/>
    <property type="evidence" value="ECO:0007669"/>
    <property type="project" value="UniProtKB-UniRule"/>
</dbReference>
<dbReference type="CDD" id="cd02412">
    <property type="entry name" value="KH-II_30S_S3"/>
    <property type="match status" value="1"/>
</dbReference>
<dbReference type="FunFam" id="3.30.1140.32:FF:000001">
    <property type="entry name" value="30S ribosomal protein S3"/>
    <property type="match status" value="1"/>
</dbReference>
<dbReference type="FunFam" id="3.30.300.20:FF:000001">
    <property type="entry name" value="30S ribosomal protein S3"/>
    <property type="match status" value="1"/>
</dbReference>
<dbReference type="Gene3D" id="3.30.300.20">
    <property type="match status" value="1"/>
</dbReference>
<dbReference type="Gene3D" id="3.30.1140.32">
    <property type="entry name" value="Ribosomal protein S3, C-terminal domain"/>
    <property type="match status" value="1"/>
</dbReference>
<dbReference type="HAMAP" id="MF_01309_B">
    <property type="entry name" value="Ribosomal_uS3_B"/>
    <property type="match status" value="1"/>
</dbReference>
<dbReference type="InterPro" id="IPR004087">
    <property type="entry name" value="KH_dom"/>
</dbReference>
<dbReference type="InterPro" id="IPR015946">
    <property type="entry name" value="KH_dom-like_a/b"/>
</dbReference>
<dbReference type="InterPro" id="IPR004044">
    <property type="entry name" value="KH_dom_type_2"/>
</dbReference>
<dbReference type="InterPro" id="IPR009019">
    <property type="entry name" value="KH_sf_prok-type"/>
</dbReference>
<dbReference type="InterPro" id="IPR036419">
    <property type="entry name" value="Ribosomal_S3_C_sf"/>
</dbReference>
<dbReference type="InterPro" id="IPR005704">
    <property type="entry name" value="Ribosomal_uS3_bac-typ"/>
</dbReference>
<dbReference type="InterPro" id="IPR001351">
    <property type="entry name" value="Ribosomal_uS3_C"/>
</dbReference>
<dbReference type="InterPro" id="IPR018280">
    <property type="entry name" value="Ribosomal_uS3_CS"/>
</dbReference>
<dbReference type="NCBIfam" id="TIGR01009">
    <property type="entry name" value="rpsC_bact"/>
    <property type="match status" value="1"/>
</dbReference>
<dbReference type="PANTHER" id="PTHR11760">
    <property type="entry name" value="30S/40S RIBOSOMAL PROTEIN S3"/>
    <property type="match status" value="1"/>
</dbReference>
<dbReference type="PANTHER" id="PTHR11760:SF19">
    <property type="entry name" value="SMALL RIBOSOMAL SUBUNIT PROTEIN US3C"/>
    <property type="match status" value="1"/>
</dbReference>
<dbReference type="Pfam" id="PF07650">
    <property type="entry name" value="KH_2"/>
    <property type="match status" value="1"/>
</dbReference>
<dbReference type="Pfam" id="PF00189">
    <property type="entry name" value="Ribosomal_S3_C"/>
    <property type="match status" value="1"/>
</dbReference>
<dbReference type="SMART" id="SM00322">
    <property type="entry name" value="KH"/>
    <property type="match status" value="1"/>
</dbReference>
<dbReference type="SUPFAM" id="SSF54814">
    <property type="entry name" value="Prokaryotic type KH domain (KH-domain type II)"/>
    <property type="match status" value="1"/>
</dbReference>
<dbReference type="SUPFAM" id="SSF54821">
    <property type="entry name" value="Ribosomal protein S3 C-terminal domain"/>
    <property type="match status" value="1"/>
</dbReference>
<dbReference type="PROSITE" id="PS50823">
    <property type="entry name" value="KH_TYPE_2"/>
    <property type="match status" value="1"/>
</dbReference>
<dbReference type="PROSITE" id="PS00548">
    <property type="entry name" value="RIBOSOMAL_S3"/>
    <property type="match status" value="1"/>
</dbReference>
<evidence type="ECO:0000255" key="1">
    <source>
        <dbReference type="HAMAP-Rule" id="MF_01309"/>
    </source>
</evidence>
<evidence type="ECO:0000305" key="2"/>
<feature type="chain" id="PRO_1000140920" description="Small ribosomal subunit protein uS3">
    <location>
        <begin position="1"/>
        <end position="218"/>
    </location>
</feature>
<feature type="domain" description="KH type-2" evidence="1">
    <location>
        <begin position="38"/>
        <end position="106"/>
    </location>
</feature>
<sequence length="218" mass="24399">MGQKVNPIGLRIGIIRDWESRWYAEKDYADLLHEDLKIREYLTKRLSDAAVSRIEIERAANRVNITIHTAKPGMVIGKGGSEVEALRKALNELTGKRVHINIVEIKKPDLEAKLVAENIARQIENRVSFRRAQKQAIQRTMRAGAKGIKTMVSGRLGGADIARSEHYSEGTVPLHTLRADIDYATAEADTTYGKIGVKVWIYRGEVLPTKKKTEEGGN</sequence>
<gene>
    <name evidence="1" type="primary">rpsC</name>
    <name type="ordered locus">Aflv_0111</name>
</gene>
<name>RS3_ANOFW</name>